<sequence>MPSAPTWPALITTLIEGRHLSVSESTWAMRQVMRGEATPAQLGGLLVALRASGETVDEIVGFRDAVLEDALPLDADPRALDIVGTGGDPYGAVLNISSAASIVAASTGVPVIKHGNRGASSASGASDVLTALGIDLTIAPERVAAVLRETGITYAHAALFHPGFRHAAATRRELGISTLFNVLGPLCNPARPEASAVGVADLSRVPLMVGVFRTRGATALVYRGDDGIDKLTTTGHSHIWEVSRGAVTEHDLDPLELGIPRAPIEALLGEGVEENAEVIRRVLAGEPGPQRDVVLLNAAAGLEAFDLMGDPTRVQQPMARRLREKVTVAAEAVDSGRAAAKLEEWAAATRA</sequence>
<accession>B0REA1</accession>
<proteinExistence type="inferred from homology"/>
<comment type="function">
    <text evidence="1">Catalyzes the transfer of the phosphoribosyl group of 5-phosphorylribose-1-pyrophosphate (PRPP) to anthranilate to yield N-(5'-phosphoribosyl)-anthranilate (PRA).</text>
</comment>
<comment type="catalytic activity">
    <reaction evidence="1">
        <text>N-(5-phospho-beta-D-ribosyl)anthranilate + diphosphate = 5-phospho-alpha-D-ribose 1-diphosphate + anthranilate</text>
        <dbReference type="Rhea" id="RHEA:11768"/>
        <dbReference type="ChEBI" id="CHEBI:16567"/>
        <dbReference type="ChEBI" id="CHEBI:18277"/>
        <dbReference type="ChEBI" id="CHEBI:33019"/>
        <dbReference type="ChEBI" id="CHEBI:58017"/>
        <dbReference type="EC" id="2.4.2.18"/>
    </reaction>
</comment>
<comment type="cofactor">
    <cofactor evidence="1">
        <name>Mg(2+)</name>
        <dbReference type="ChEBI" id="CHEBI:18420"/>
    </cofactor>
    <text evidence="1">Binds 2 magnesium ions per monomer.</text>
</comment>
<comment type="pathway">
    <text evidence="1">Amino-acid biosynthesis; L-tryptophan biosynthesis; L-tryptophan from chorismate: step 2/5.</text>
</comment>
<comment type="subunit">
    <text evidence="1">Homodimer.</text>
</comment>
<comment type="similarity">
    <text evidence="1">Belongs to the anthranilate phosphoribosyltransferase family.</text>
</comment>
<evidence type="ECO:0000255" key="1">
    <source>
        <dbReference type="HAMAP-Rule" id="MF_00211"/>
    </source>
</evidence>
<feature type="chain" id="PRO_1000078010" description="Anthranilate phosphoribosyltransferase">
    <location>
        <begin position="1"/>
        <end position="351"/>
    </location>
</feature>
<feature type="binding site" evidence="1">
    <location>
        <position position="84"/>
    </location>
    <ligand>
        <name>5-phospho-alpha-D-ribose 1-diphosphate</name>
        <dbReference type="ChEBI" id="CHEBI:58017"/>
    </ligand>
</feature>
<feature type="binding site" evidence="1">
    <location>
        <position position="84"/>
    </location>
    <ligand>
        <name>anthranilate</name>
        <dbReference type="ChEBI" id="CHEBI:16567"/>
        <label>1</label>
    </ligand>
</feature>
<feature type="binding site" evidence="1">
    <location>
        <begin position="87"/>
        <end position="88"/>
    </location>
    <ligand>
        <name>5-phospho-alpha-D-ribose 1-diphosphate</name>
        <dbReference type="ChEBI" id="CHEBI:58017"/>
    </ligand>
</feature>
<feature type="binding site" evidence="1">
    <location>
        <begin position="95"/>
        <end position="98"/>
    </location>
    <ligand>
        <name>5-phospho-alpha-D-ribose 1-diphosphate</name>
        <dbReference type="ChEBI" id="CHEBI:58017"/>
    </ligand>
</feature>
<feature type="binding site" evidence="1">
    <location>
        <position position="97"/>
    </location>
    <ligand>
        <name>Mg(2+)</name>
        <dbReference type="ChEBI" id="CHEBI:18420"/>
        <label>1</label>
    </ligand>
</feature>
<feature type="binding site" evidence="1">
    <location>
        <begin position="113"/>
        <end position="121"/>
    </location>
    <ligand>
        <name>5-phospho-alpha-D-ribose 1-diphosphate</name>
        <dbReference type="ChEBI" id="CHEBI:58017"/>
    </ligand>
</feature>
<feature type="binding site" evidence="1">
    <location>
        <position position="116"/>
    </location>
    <ligand>
        <name>anthranilate</name>
        <dbReference type="ChEBI" id="CHEBI:16567"/>
        <label>1</label>
    </ligand>
</feature>
<feature type="binding site" evidence="1">
    <location>
        <position position="125"/>
    </location>
    <ligand>
        <name>5-phospho-alpha-D-ribose 1-diphosphate</name>
        <dbReference type="ChEBI" id="CHEBI:58017"/>
    </ligand>
</feature>
<feature type="binding site" evidence="1">
    <location>
        <position position="171"/>
    </location>
    <ligand>
        <name>anthranilate</name>
        <dbReference type="ChEBI" id="CHEBI:16567"/>
        <label>2</label>
    </ligand>
</feature>
<feature type="binding site" evidence="1">
    <location>
        <position position="229"/>
    </location>
    <ligand>
        <name>Mg(2+)</name>
        <dbReference type="ChEBI" id="CHEBI:18420"/>
        <label>2</label>
    </ligand>
</feature>
<feature type="binding site" evidence="1">
    <location>
        <position position="230"/>
    </location>
    <ligand>
        <name>Mg(2+)</name>
        <dbReference type="ChEBI" id="CHEBI:18420"/>
        <label>1</label>
    </ligand>
</feature>
<feature type="binding site" evidence="1">
    <location>
        <position position="230"/>
    </location>
    <ligand>
        <name>Mg(2+)</name>
        <dbReference type="ChEBI" id="CHEBI:18420"/>
        <label>2</label>
    </ligand>
</feature>
<keyword id="KW-0028">Amino-acid biosynthesis</keyword>
<keyword id="KW-0057">Aromatic amino acid biosynthesis</keyword>
<keyword id="KW-0328">Glycosyltransferase</keyword>
<keyword id="KW-0460">Magnesium</keyword>
<keyword id="KW-0479">Metal-binding</keyword>
<keyword id="KW-0808">Transferase</keyword>
<keyword id="KW-0822">Tryptophan biosynthesis</keyword>
<dbReference type="EC" id="2.4.2.18" evidence="1"/>
<dbReference type="EMBL" id="AM849034">
    <property type="protein sequence ID" value="CAQ00819.1"/>
    <property type="molecule type" value="Genomic_DNA"/>
</dbReference>
<dbReference type="RefSeq" id="WP_012298129.1">
    <property type="nucleotide sequence ID" value="NZ_MZMN01000003.1"/>
</dbReference>
<dbReference type="SMR" id="B0REA1"/>
<dbReference type="STRING" id="31964.CMS0699"/>
<dbReference type="KEGG" id="cms:CMS0699"/>
<dbReference type="eggNOG" id="COG0547">
    <property type="taxonomic scope" value="Bacteria"/>
</dbReference>
<dbReference type="HOGENOM" id="CLU_034315_4_1_11"/>
<dbReference type="OrthoDB" id="9806430at2"/>
<dbReference type="UniPathway" id="UPA00035">
    <property type="reaction ID" value="UER00041"/>
</dbReference>
<dbReference type="Proteomes" id="UP000001318">
    <property type="component" value="Chromosome"/>
</dbReference>
<dbReference type="GO" id="GO:0005829">
    <property type="term" value="C:cytosol"/>
    <property type="evidence" value="ECO:0007669"/>
    <property type="project" value="TreeGrafter"/>
</dbReference>
<dbReference type="GO" id="GO:0004048">
    <property type="term" value="F:anthranilate phosphoribosyltransferase activity"/>
    <property type="evidence" value="ECO:0007669"/>
    <property type="project" value="UniProtKB-UniRule"/>
</dbReference>
<dbReference type="GO" id="GO:0000287">
    <property type="term" value="F:magnesium ion binding"/>
    <property type="evidence" value="ECO:0007669"/>
    <property type="project" value="UniProtKB-UniRule"/>
</dbReference>
<dbReference type="GO" id="GO:0000162">
    <property type="term" value="P:L-tryptophan biosynthetic process"/>
    <property type="evidence" value="ECO:0007669"/>
    <property type="project" value="UniProtKB-UniRule"/>
</dbReference>
<dbReference type="Gene3D" id="3.40.1030.10">
    <property type="entry name" value="Nucleoside phosphorylase/phosphoribosyltransferase catalytic domain"/>
    <property type="match status" value="1"/>
</dbReference>
<dbReference type="Gene3D" id="1.20.970.10">
    <property type="entry name" value="Transferase, Pyrimidine Nucleoside Phosphorylase, Chain C"/>
    <property type="match status" value="1"/>
</dbReference>
<dbReference type="HAMAP" id="MF_00211">
    <property type="entry name" value="TrpD"/>
    <property type="match status" value="1"/>
</dbReference>
<dbReference type="InterPro" id="IPR005940">
    <property type="entry name" value="Anthranilate_Pribosyl_Tfrase"/>
</dbReference>
<dbReference type="InterPro" id="IPR000312">
    <property type="entry name" value="Glycosyl_Trfase_fam3"/>
</dbReference>
<dbReference type="InterPro" id="IPR017459">
    <property type="entry name" value="Glycosyl_Trfase_fam3_N_dom"/>
</dbReference>
<dbReference type="InterPro" id="IPR036320">
    <property type="entry name" value="Glycosyl_Trfase_fam3_N_dom_sf"/>
</dbReference>
<dbReference type="InterPro" id="IPR035902">
    <property type="entry name" value="Nuc_phospho_transferase"/>
</dbReference>
<dbReference type="NCBIfam" id="TIGR01245">
    <property type="entry name" value="trpD"/>
    <property type="match status" value="1"/>
</dbReference>
<dbReference type="PANTHER" id="PTHR43285">
    <property type="entry name" value="ANTHRANILATE PHOSPHORIBOSYLTRANSFERASE"/>
    <property type="match status" value="1"/>
</dbReference>
<dbReference type="PANTHER" id="PTHR43285:SF2">
    <property type="entry name" value="ANTHRANILATE PHOSPHORIBOSYLTRANSFERASE"/>
    <property type="match status" value="1"/>
</dbReference>
<dbReference type="Pfam" id="PF02885">
    <property type="entry name" value="Glycos_trans_3N"/>
    <property type="match status" value="1"/>
</dbReference>
<dbReference type="Pfam" id="PF00591">
    <property type="entry name" value="Glycos_transf_3"/>
    <property type="match status" value="1"/>
</dbReference>
<dbReference type="SUPFAM" id="SSF52418">
    <property type="entry name" value="Nucleoside phosphorylase/phosphoribosyltransferase catalytic domain"/>
    <property type="match status" value="1"/>
</dbReference>
<dbReference type="SUPFAM" id="SSF47648">
    <property type="entry name" value="Nucleoside phosphorylase/phosphoribosyltransferase N-terminal domain"/>
    <property type="match status" value="1"/>
</dbReference>
<organism>
    <name type="scientific">Clavibacter sepedonicus</name>
    <name type="common">Clavibacter michiganensis subsp. sepedonicus</name>
    <dbReference type="NCBI Taxonomy" id="31964"/>
    <lineage>
        <taxon>Bacteria</taxon>
        <taxon>Bacillati</taxon>
        <taxon>Actinomycetota</taxon>
        <taxon>Actinomycetes</taxon>
        <taxon>Micrococcales</taxon>
        <taxon>Microbacteriaceae</taxon>
        <taxon>Clavibacter</taxon>
    </lineage>
</organism>
<gene>
    <name evidence="1" type="primary">trpD</name>
    <name type="ordered locus">CMS0699</name>
</gene>
<name>TRPD_CLASE</name>
<reference key="1">
    <citation type="journal article" date="2008" name="J. Bacteriol.">
        <title>Genome of the actinomycete plant pathogen Clavibacter michiganensis subsp. sepedonicus suggests recent niche adaptation.</title>
        <authorList>
            <person name="Bentley S.D."/>
            <person name="Corton C."/>
            <person name="Brown S.E."/>
            <person name="Barron A."/>
            <person name="Clark L."/>
            <person name="Doggett J."/>
            <person name="Harris B."/>
            <person name="Ormond D."/>
            <person name="Quail M.A."/>
            <person name="May G."/>
            <person name="Francis D."/>
            <person name="Knudson D."/>
            <person name="Parkhill J."/>
            <person name="Ishimaru C.A."/>
        </authorList>
    </citation>
    <scope>NUCLEOTIDE SEQUENCE [LARGE SCALE GENOMIC DNA]</scope>
    <source>
        <strain>ATCC 33113 / DSM 20744 / JCM 9667 / LMG 2889 / ICMP 2535 / C-1</strain>
    </source>
</reference>
<protein>
    <recommendedName>
        <fullName evidence="1">Anthranilate phosphoribosyltransferase</fullName>
        <ecNumber evidence="1">2.4.2.18</ecNumber>
    </recommendedName>
</protein>